<accession>Q6NVF4</accession>
<accession>G5E835</accession>
<accession>Q6KAT5</accession>
<accession>Q8C930</accession>
<accession>Q9EQT8</accession>
<sequence length="1074" mass="121471">MARQDRLRELLGPLHPYKSDDEEEDCAQEEEGEQEEEFVDAEELCSGGIKAGSLPGRARVSIPDEYTKEKCTVYGRFPLKGPWWRVKVQVLKPQRSRSYQVQGFPAYFLQVDMSPPDQKQICSLFLKECNLASERIQEFLKWVEKVSSFENLHFENLWETLRLFYRETEKKDKKLSTPREQQGEEMRVEKSFAFISAMVALQFPKVMEFLPSLFPRHFKRLISSSSDWVLGCIEDVLGTQPWKLGFRRITYREMKLVRCEASWTAFSQCPSLLQLMTPLQKNALVIYSKLRQTCREDGHTYIEVKDLTSGLSEHMSFEEACQSLAFLKDIDVVIYEKDYVFLSELYEAEQDIASSICELMSRPPWHLKVDVKNVLASIRGAKPNDPGSAEAVEGSKPEEVGSEQGDSVLDAQDGDDHVRSNGEHVANAEINDVPLDQDQVVALETICANAVTVLSGKGGCGKTTIVSRLFKHMEHLEETEVQQACEDFEQDQEASEEWLDCPKQSPAGVDKAVEVLLTAPTGKAAGLLRQRTDLPAYTLCQVNYSFYMWKTKNEVDKPWKFSTVRVLVVDEGSLVSVGIFKSVLQLLCKHSKLSKLIILGDVRQLPSIEPGNMLQDVFETLKSRQCAIELKTNHRTESQLIVDNATRISRRQFPKFDAELNICGNPTLPLSIQDKTFIFVRLPEEDSRSQSSKGEHRSNLYTAVKTLLQGKDFCSFESSKTSQFIAFRRQDCDLINDCCCKHYTGHLIKDHEKKLIFAVGDKICCTRNAYLSDLLPDKDQEAEGKGYGDAPDDDAKIKQDFESSTRLCNGEIFFITRDVTDVTFKRKRLLTINNEAGLEVTVDFSKLMANCQIKHAWARTIHTFQGSEENTVVYVVGKAGRQHWQHVYTAVTRGRSRVYIIAQESELRSATRKRGFPRQTRLKHFLQKKLSGSCAPSTGFASQPSSPRVGGRPDTQPPASHLCRTPDNKATADSARGDERWLSASVNDDVDTDEESAQLRGSKRIGDGFPFDEESPSKFRMVEAPSPQVSSVFQNMRLNTLTPRQLFKPTDNQDTGTAGVADDANDPSNQEMEM</sequence>
<keyword id="KW-0067">ATP-binding</keyword>
<keyword id="KW-0158">Chromosome</keyword>
<keyword id="KW-0963">Cytoplasm</keyword>
<keyword id="KW-0903">Direct protein sequencing</keyword>
<keyword id="KW-0347">Helicase</keyword>
<keyword id="KW-0378">Hydrolase</keyword>
<keyword id="KW-0547">Nucleotide-binding</keyword>
<keyword id="KW-0539">Nucleus</keyword>
<keyword id="KW-0597">Phosphoprotein</keyword>
<keyword id="KW-1185">Reference proteome</keyword>
<reference key="1">
    <citation type="journal article" date="2001" name="Nucleic Acids Res.">
        <title>Molecular cloning of a cDNA encoding mouse DNA helicase B, which has homology to Escherichia coli RecD protein, and identification of a mutation in the DNA helicase B from tsFT848 temperature-sensitive DNA replication mutant cells.</title>
        <authorList>
            <person name="Tada S."/>
            <person name="Kobayashi T."/>
            <person name="Omori A."/>
            <person name="Kusa Y."/>
            <person name="Okumura N."/>
            <person name="Kodaira H."/>
            <person name="Ishimi Y."/>
            <person name="Seki M."/>
            <person name="Enomoto T."/>
        </authorList>
    </citation>
    <scope>NUCLEOTIDE SEQUENCE [MRNA]</scope>
    <scope>PROTEIN SEQUENCE OF 69-82; 632-648 AND 797-814</scope>
    <scope>FUNCTION</scope>
    <source>
        <tissue>Fetal brain</tissue>
    </source>
</reference>
<reference key="2">
    <citation type="journal article" date="2004" name="DNA Res.">
        <title>Prediction of the coding sequences of mouse homologues of FLJ genes: the complete nucleotide sequences of 110 mouse FLJ-homologous cDNAs identified by screening of terminal sequences of cDNA clones randomly sampled from size-fractionated libraries.</title>
        <authorList>
            <person name="Okazaki N."/>
            <person name="Kikuno R."/>
            <person name="Ohara R."/>
            <person name="Inamoto S."/>
            <person name="Koseki H."/>
            <person name="Hiraoka S."/>
            <person name="Saga Y."/>
            <person name="Kitamura H."/>
            <person name="Nakagawa T."/>
            <person name="Nagase T."/>
            <person name="Ohara O."/>
            <person name="Koga H."/>
        </authorList>
    </citation>
    <scope>NUCLEOTIDE SEQUENCE [LARGE SCALE MRNA]</scope>
    <source>
        <tissue>Embryonic tail</tissue>
    </source>
</reference>
<reference key="3">
    <citation type="journal article" date="2009" name="PLoS Biol.">
        <title>Lineage-specific biology revealed by a finished genome assembly of the mouse.</title>
        <authorList>
            <person name="Church D.M."/>
            <person name="Goodstadt L."/>
            <person name="Hillier L.W."/>
            <person name="Zody M.C."/>
            <person name="Goldstein S."/>
            <person name="She X."/>
            <person name="Bult C.J."/>
            <person name="Agarwala R."/>
            <person name="Cherry J.L."/>
            <person name="DiCuccio M."/>
            <person name="Hlavina W."/>
            <person name="Kapustin Y."/>
            <person name="Meric P."/>
            <person name="Maglott D."/>
            <person name="Birtle Z."/>
            <person name="Marques A.C."/>
            <person name="Graves T."/>
            <person name="Zhou S."/>
            <person name="Teague B."/>
            <person name="Potamousis K."/>
            <person name="Churas C."/>
            <person name="Place M."/>
            <person name="Herschleb J."/>
            <person name="Runnheim R."/>
            <person name="Forrest D."/>
            <person name="Amos-Landgraf J."/>
            <person name="Schwartz D.C."/>
            <person name="Cheng Z."/>
            <person name="Lindblad-Toh K."/>
            <person name="Eichler E.E."/>
            <person name="Ponting C.P."/>
        </authorList>
    </citation>
    <scope>NUCLEOTIDE SEQUENCE [LARGE SCALE GENOMIC DNA]</scope>
    <source>
        <strain>C57BL/6J</strain>
    </source>
</reference>
<reference key="4">
    <citation type="submission" date="2005-07" db="EMBL/GenBank/DDBJ databases">
        <authorList>
            <person name="Mural R.J."/>
            <person name="Adams M.D."/>
            <person name="Myers E.W."/>
            <person name="Smith H.O."/>
            <person name="Venter J.C."/>
        </authorList>
    </citation>
    <scope>NUCLEOTIDE SEQUENCE [LARGE SCALE GENOMIC DNA]</scope>
</reference>
<reference key="5">
    <citation type="journal article" date="2004" name="Genome Res.">
        <title>The status, quality, and expansion of the NIH full-length cDNA project: the Mammalian Gene Collection (MGC).</title>
        <authorList>
            <consortium name="The MGC Project Team"/>
        </authorList>
    </citation>
    <scope>NUCLEOTIDE SEQUENCE [LARGE SCALE MRNA]</scope>
    <source>
        <strain>C57BL/6J</strain>
        <tissue>Brain</tissue>
    </source>
</reference>
<reference key="6">
    <citation type="journal article" date="2005" name="Science">
        <title>The transcriptional landscape of the mammalian genome.</title>
        <authorList>
            <person name="Carninci P."/>
            <person name="Kasukawa T."/>
            <person name="Katayama S."/>
            <person name="Gough J."/>
            <person name="Frith M.C."/>
            <person name="Maeda N."/>
            <person name="Oyama R."/>
            <person name="Ravasi T."/>
            <person name="Lenhard B."/>
            <person name="Wells C."/>
            <person name="Kodzius R."/>
            <person name="Shimokawa K."/>
            <person name="Bajic V.B."/>
            <person name="Brenner S.E."/>
            <person name="Batalov S."/>
            <person name="Forrest A.R."/>
            <person name="Zavolan M."/>
            <person name="Davis M.J."/>
            <person name="Wilming L.G."/>
            <person name="Aidinis V."/>
            <person name="Allen J.E."/>
            <person name="Ambesi-Impiombato A."/>
            <person name="Apweiler R."/>
            <person name="Aturaliya R.N."/>
            <person name="Bailey T.L."/>
            <person name="Bansal M."/>
            <person name="Baxter L."/>
            <person name="Beisel K.W."/>
            <person name="Bersano T."/>
            <person name="Bono H."/>
            <person name="Chalk A.M."/>
            <person name="Chiu K.P."/>
            <person name="Choudhary V."/>
            <person name="Christoffels A."/>
            <person name="Clutterbuck D.R."/>
            <person name="Crowe M.L."/>
            <person name="Dalla E."/>
            <person name="Dalrymple B.P."/>
            <person name="de Bono B."/>
            <person name="Della Gatta G."/>
            <person name="di Bernardo D."/>
            <person name="Down T."/>
            <person name="Engstrom P."/>
            <person name="Fagiolini M."/>
            <person name="Faulkner G."/>
            <person name="Fletcher C.F."/>
            <person name="Fukushima T."/>
            <person name="Furuno M."/>
            <person name="Futaki S."/>
            <person name="Gariboldi M."/>
            <person name="Georgii-Hemming P."/>
            <person name="Gingeras T.R."/>
            <person name="Gojobori T."/>
            <person name="Green R.E."/>
            <person name="Gustincich S."/>
            <person name="Harbers M."/>
            <person name="Hayashi Y."/>
            <person name="Hensch T.K."/>
            <person name="Hirokawa N."/>
            <person name="Hill D."/>
            <person name="Huminiecki L."/>
            <person name="Iacono M."/>
            <person name="Ikeo K."/>
            <person name="Iwama A."/>
            <person name="Ishikawa T."/>
            <person name="Jakt M."/>
            <person name="Kanapin A."/>
            <person name="Katoh M."/>
            <person name="Kawasawa Y."/>
            <person name="Kelso J."/>
            <person name="Kitamura H."/>
            <person name="Kitano H."/>
            <person name="Kollias G."/>
            <person name="Krishnan S.P."/>
            <person name="Kruger A."/>
            <person name="Kummerfeld S.K."/>
            <person name="Kurochkin I.V."/>
            <person name="Lareau L.F."/>
            <person name="Lazarevic D."/>
            <person name="Lipovich L."/>
            <person name="Liu J."/>
            <person name="Liuni S."/>
            <person name="McWilliam S."/>
            <person name="Madan Babu M."/>
            <person name="Madera M."/>
            <person name="Marchionni L."/>
            <person name="Matsuda H."/>
            <person name="Matsuzawa S."/>
            <person name="Miki H."/>
            <person name="Mignone F."/>
            <person name="Miyake S."/>
            <person name="Morris K."/>
            <person name="Mottagui-Tabar S."/>
            <person name="Mulder N."/>
            <person name="Nakano N."/>
            <person name="Nakauchi H."/>
            <person name="Ng P."/>
            <person name="Nilsson R."/>
            <person name="Nishiguchi S."/>
            <person name="Nishikawa S."/>
            <person name="Nori F."/>
            <person name="Ohara O."/>
            <person name="Okazaki Y."/>
            <person name="Orlando V."/>
            <person name="Pang K.C."/>
            <person name="Pavan W.J."/>
            <person name="Pavesi G."/>
            <person name="Pesole G."/>
            <person name="Petrovsky N."/>
            <person name="Piazza S."/>
            <person name="Reed J."/>
            <person name="Reid J.F."/>
            <person name="Ring B.Z."/>
            <person name="Ringwald M."/>
            <person name="Rost B."/>
            <person name="Ruan Y."/>
            <person name="Salzberg S.L."/>
            <person name="Sandelin A."/>
            <person name="Schneider C."/>
            <person name="Schoenbach C."/>
            <person name="Sekiguchi K."/>
            <person name="Semple C.A."/>
            <person name="Seno S."/>
            <person name="Sessa L."/>
            <person name="Sheng Y."/>
            <person name="Shibata Y."/>
            <person name="Shimada H."/>
            <person name="Shimada K."/>
            <person name="Silva D."/>
            <person name="Sinclair B."/>
            <person name="Sperling S."/>
            <person name="Stupka E."/>
            <person name="Sugiura K."/>
            <person name="Sultana R."/>
            <person name="Takenaka Y."/>
            <person name="Taki K."/>
            <person name="Tammoja K."/>
            <person name="Tan S.L."/>
            <person name="Tang S."/>
            <person name="Taylor M.S."/>
            <person name="Tegner J."/>
            <person name="Teichmann S.A."/>
            <person name="Ueda H.R."/>
            <person name="van Nimwegen E."/>
            <person name="Verardo R."/>
            <person name="Wei C.L."/>
            <person name="Yagi K."/>
            <person name="Yamanishi H."/>
            <person name="Zabarovsky E."/>
            <person name="Zhu S."/>
            <person name="Zimmer A."/>
            <person name="Hide W."/>
            <person name="Bult C."/>
            <person name="Grimmond S.M."/>
            <person name="Teasdale R.D."/>
            <person name="Liu E.T."/>
            <person name="Brusic V."/>
            <person name="Quackenbush J."/>
            <person name="Wahlestedt C."/>
            <person name="Mattick J.S."/>
            <person name="Hume D.A."/>
            <person name="Kai C."/>
            <person name="Sasaki D."/>
            <person name="Tomaru Y."/>
            <person name="Fukuda S."/>
            <person name="Kanamori-Katayama M."/>
            <person name="Suzuki M."/>
            <person name="Aoki J."/>
            <person name="Arakawa T."/>
            <person name="Iida J."/>
            <person name="Imamura K."/>
            <person name="Itoh M."/>
            <person name="Kato T."/>
            <person name="Kawaji H."/>
            <person name="Kawagashira N."/>
            <person name="Kawashima T."/>
            <person name="Kojima M."/>
            <person name="Kondo S."/>
            <person name="Konno H."/>
            <person name="Nakano K."/>
            <person name="Ninomiya N."/>
            <person name="Nishio T."/>
            <person name="Okada M."/>
            <person name="Plessy C."/>
            <person name="Shibata K."/>
            <person name="Shiraki T."/>
            <person name="Suzuki S."/>
            <person name="Tagami M."/>
            <person name="Waki K."/>
            <person name="Watahiki A."/>
            <person name="Okamura-Oho Y."/>
            <person name="Suzuki H."/>
            <person name="Kawai J."/>
            <person name="Hayashizaki Y."/>
        </authorList>
    </citation>
    <scope>NUCLEOTIDE SEQUENCE [LARGE SCALE MRNA] OF 1-168</scope>
    <source>
        <strain>C57BL/6J</strain>
        <tissue>Cerebellum</tissue>
    </source>
</reference>
<reference key="7">
    <citation type="journal article" date="1995" name="Biochemistry">
        <title>Stimulation of DNA synthesis by mouse DNA helicase B in a DNA replication system containing eukaryotic replication origins.</title>
        <authorList>
            <person name="Matsumoto K."/>
            <person name="Seki M."/>
            <person name="Masutani C."/>
            <person name="Tada S."/>
            <person name="Enomoto T."/>
            <person name="Ishimi Y."/>
        </authorList>
    </citation>
    <scope>FUNCTION</scope>
</reference>
<reference key="8">
    <citation type="journal article" date="1995" name="Nucleic Acids Res.">
        <title>Stimulation of mouse DNA primase-catalyzed oligoribonucleotide synthesis by mouse DNA helicase B.</title>
        <authorList>
            <person name="Saitoh A."/>
            <person name="Tada S."/>
            <person name="Katada T."/>
            <person name="Enomoto T."/>
        </authorList>
    </citation>
    <scope>FUNCTION</scope>
</reference>
<reference key="9">
    <citation type="journal article" date="2007" name="Proc. Natl. Acad. Sci. U.S.A.">
        <title>Large-scale phosphorylation analysis of mouse liver.</title>
        <authorList>
            <person name="Villen J."/>
            <person name="Beausoleil S.A."/>
            <person name="Gerber S.A."/>
            <person name="Gygi S.P."/>
        </authorList>
    </citation>
    <scope>PHOSPHORYLATION [LARGE SCALE ANALYSIS] AT SER-942 AND SER-946</scope>
    <scope>IDENTIFICATION BY MASS SPECTROMETRY [LARGE SCALE ANALYSIS]</scope>
    <source>
        <tissue>Liver</tissue>
    </source>
</reference>
<reference key="10">
    <citation type="journal article" date="2010" name="Cell">
        <title>A tissue-specific atlas of mouse protein phosphorylation and expression.</title>
        <authorList>
            <person name="Huttlin E.L."/>
            <person name="Jedrychowski M.P."/>
            <person name="Elias J.E."/>
            <person name="Goswami T."/>
            <person name="Rad R."/>
            <person name="Beausoleil S.A."/>
            <person name="Villen J."/>
            <person name="Haas W."/>
            <person name="Sowa M.E."/>
            <person name="Gygi S.P."/>
        </authorList>
    </citation>
    <scope>PHOSPHORYLATION [LARGE SCALE ANALYSIS] AT SER-942; SER-946; THR-992 AND SER-1015</scope>
    <scope>IDENTIFICATION BY MASS SPECTROMETRY [LARGE SCALE ANALYSIS]</scope>
    <source>
        <tissue>Brain</tissue>
        <tissue>Brown adipose tissue</tissue>
        <tissue>Heart</tissue>
        <tissue>Kidney</tissue>
        <tissue>Liver</tissue>
        <tissue>Lung</tissue>
        <tissue>Pancreas</tissue>
        <tissue>Spleen</tissue>
        <tissue>Testis</tissue>
    </source>
</reference>
<reference key="11">
    <citation type="journal article" date="2016" name="Mol. Cell">
        <title>HELB is a feedback inhibitor of DNA end resection.</title>
        <authorList>
            <person name="Tkac J."/>
            <person name="Xu G."/>
            <person name="Adhikary H."/>
            <person name="Young J.T."/>
            <person name="Gallo D."/>
            <person name="Escribano-Diaz C."/>
            <person name="Krietsch J."/>
            <person name="Orthwein A."/>
            <person name="Munro M."/>
            <person name="Sol W."/>
            <person name="Al-Hakim A."/>
            <person name="Lin Z.Y."/>
            <person name="Jonkers J."/>
            <person name="Borst P."/>
            <person name="Brown G.W."/>
            <person name="Gingras A.C."/>
            <person name="Rottenberg S."/>
            <person name="Masson J.Y."/>
            <person name="Durocher D."/>
        </authorList>
    </citation>
    <scope>FUNCTION</scope>
    <scope>SUBCELLULAR LOCATION</scope>
    <scope>MUTAGENESIS OF LYS-462 AND 1029-VAL--LEU-1038</scope>
</reference>
<evidence type="ECO:0000250" key="1">
    <source>
        <dbReference type="UniProtKB" id="Q8NG08"/>
    </source>
</evidence>
<evidence type="ECO:0000256" key="2">
    <source>
        <dbReference type="SAM" id="MobiDB-lite"/>
    </source>
</evidence>
<evidence type="ECO:0000269" key="3">
    <source>
    </source>
</evidence>
<evidence type="ECO:0000269" key="4">
    <source>
    </source>
</evidence>
<evidence type="ECO:0000269" key="5">
    <source>
    </source>
</evidence>
<evidence type="ECO:0000269" key="6">
    <source>
    </source>
</evidence>
<evidence type="ECO:0000305" key="7"/>
<evidence type="ECO:0000312" key="8">
    <source>
        <dbReference type="MGI" id="MGI:2152895"/>
    </source>
</evidence>
<evidence type="ECO:0007744" key="9">
    <source>
    </source>
</evidence>
<evidence type="ECO:0007744" key="10">
    <source>
    </source>
</evidence>
<gene>
    <name evidence="8" type="primary">Helb</name>
</gene>
<proteinExistence type="evidence at protein level"/>
<dbReference type="EC" id="3.6.4.12" evidence="1"/>
<dbReference type="EMBL" id="AB048542">
    <property type="protein sequence ID" value="BAB20809.1"/>
    <property type="molecule type" value="mRNA"/>
</dbReference>
<dbReference type="EMBL" id="AK131122">
    <property type="protein sequence ID" value="BAD21372.1"/>
    <property type="status" value="ALT_INIT"/>
    <property type="molecule type" value="mRNA"/>
</dbReference>
<dbReference type="EMBL" id="AC134326">
    <property type="status" value="NOT_ANNOTATED_CDS"/>
    <property type="molecule type" value="Genomic_DNA"/>
</dbReference>
<dbReference type="EMBL" id="AC144942">
    <property type="status" value="NOT_ANNOTATED_CDS"/>
    <property type="molecule type" value="Genomic_DNA"/>
</dbReference>
<dbReference type="EMBL" id="CH466578">
    <property type="protein sequence ID" value="EDL24397.1"/>
    <property type="molecule type" value="Genomic_DNA"/>
</dbReference>
<dbReference type="EMBL" id="BC068140">
    <property type="protein sequence ID" value="AAH68140.1"/>
    <property type="molecule type" value="mRNA"/>
</dbReference>
<dbReference type="EMBL" id="AK043127">
    <property type="protein sequence ID" value="BAC31468.1"/>
    <property type="molecule type" value="mRNA"/>
</dbReference>
<dbReference type="CCDS" id="CCDS24203.1"/>
<dbReference type="RefSeq" id="NP_536694.2">
    <property type="nucleotide sequence ID" value="NM_080446.2"/>
</dbReference>
<dbReference type="BioGRID" id="228238">
    <property type="interactions" value="6"/>
</dbReference>
<dbReference type="FunCoup" id="Q6NVF4">
    <property type="interactions" value="2424"/>
</dbReference>
<dbReference type="IntAct" id="Q6NVF4">
    <property type="interactions" value="1"/>
</dbReference>
<dbReference type="STRING" id="10090.ENSMUSP00000020449"/>
<dbReference type="GlyGen" id="Q6NVF4">
    <property type="glycosylation" value="1 site"/>
</dbReference>
<dbReference type="iPTMnet" id="Q6NVF4"/>
<dbReference type="PhosphoSitePlus" id="Q6NVF4"/>
<dbReference type="jPOST" id="Q6NVF4"/>
<dbReference type="PaxDb" id="10090-ENSMUSP00000020449"/>
<dbReference type="PeptideAtlas" id="Q6NVF4"/>
<dbReference type="ProteomicsDB" id="269730"/>
<dbReference type="Pumba" id="Q6NVF4"/>
<dbReference type="Antibodypedia" id="16658">
    <property type="antibodies" value="34 antibodies from 17 providers"/>
</dbReference>
<dbReference type="DNASU" id="117599"/>
<dbReference type="Ensembl" id="ENSMUST00000020449.12">
    <property type="protein sequence ID" value="ENSMUSP00000020449.6"/>
    <property type="gene ID" value="ENSMUSG00000020228.12"/>
</dbReference>
<dbReference type="GeneID" id="117599"/>
<dbReference type="KEGG" id="mmu:117599"/>
<dbReference type="UCSC" id="uc007hes.2">
    <property type="organism name" value="mouse"/>
</dbReference>
<dbReference type="AGR" id="MGI:2152895"/>
<dbReference type="CTD" id="92797"/>
<dbReference type="MGI" id="MGI:2152895">
    <property type="gene designation" value="Helb"/>
</dbReference>
<dbReference type="VEuPathDB" id="HostDB:ENSMUSG00000020228"/>
<dbReference type="eggNOG" id="ENOG502QWCN">
    <property type="taxonomic scope" value="Eukaryota"/>
</dbReference>
<dbReference type="GeneTree" id="ENSGT00390000006913"/>
<dbReference type="HOGENOM" id="CLU_010264_0_0_1"/>
<dbReference type="InParanoid" id="Q6NVF4"/>
<dbReference type="OMA" id="KIKHAWA"/>
<dbReference type="OrthoDB" id="416437at2759"/>
<dbReference type="PhylomeDB" id="Q6NVF4"/>
<dbReference type="TreeFam" id="TF336223"/>
<dbReference type="BioGRID-ORCS" id="117599">
    <property type="hits" value="1 hit in 111 CRISPR screens"/>
</dbReference>
<dbReference type="ChiTaRS" id="Helb">
    <property type="organism name" value="mouse"/>
</dbReference>
<dbReference type="PRO" id="PR:Q6NVF4"/>
<dbReference type="Proteomes" id="UP000000589">
    <property type="component" value="Chromosome 10"/>
</dbReference>
<dbReference type="RNAct" id="Q6NVF4">
    <property type="molecule type" value="protein"/>
</dbReference>
<dbReference type="Bgee" id="ENSMUSG00000020228">
    <property type="expression patterns" value="Expressed in ileal epithelium and 238 other cell types or tissues"/>
</dbReference>
<dbReference type="ExpressionAtlas" id="Q6NVF4">
    <property type="expression patterns" value="baseline and differential"/>
</dbReference>
<dbReference type="GO" id="GO:0005737">
    <property type="term" value="C:cytoplasm"/>
    <property type="evidence" value="ECO:0000314"/>
    <property type="project" value="UniProtKB"/>
</dbReference>
<dbReference type="GO" id="GO:0005829">
    <property type="term" value="C:cytosol"/>
    <property type="evidence" value="ECO:0007669"/>
    <property type="project" value="Ensembl"/>
</dbReference>
<dbReference type="GO" id="GO:0005662">
    <property type="term" value="C:DNA replication factor A complex"/>
    <property type="evidence" value="ECO:0007669"/>
    <property type="project" value="Ensembl"/>
</dbReference>
<dbReference type="GO" id="GO:0005739">
    <property type="term" value="C:mitochondrion"/>
    <property type="evidence" value="ECO:0007669"/>
    <property type="project" value="Ensembl"/>
</dbReference>
<dbReference type="GO" id="GO:0016604">
    <property type="term" value="C:nuclear body"/>
    <property type="evidence" value="ECO:0007669"/>
    <property type="project" value="Ensembl"/>
</dbReference>
<dbReference type="GO" id="GO:0005634">
    <property type="term" value="C:nucleus"/>
    <property type="evidence" value="ECO:0000314"/>
    <property type="project" value="UniProtKB"/>
</dbReference>
<dbReference type="GO" id="GO:0035861">
    <property type="term" value="C:site of double-strand break"/>
    <property type="evidence" value="ECO:0000250"/>
    <property type="project" value="UniProtKB"/>
</dbReference>
<dbReference type="GO" id="GO:0043139">
    <property type="term" value="F:5'-3' DNA helicase activity"/>
    <property type="evidence" value="ECO:0007669"/>
    <property type="project" value="Ensembl"/>
</dbReference>
<dbReference type="GO" id="GO:0005524">
    <property type="term" value="F:ATP binding"/>
    <property type="evidence" value="ECO:0007669"/>
    <property type="project" value="UniProtKB-KW"/>
</dbReference>
<dbReference type="GO" id="GO:0016887">
    <property type="term" value="F:ATP hydrolysis activity"/>
    <property type="evidence" value="ECO:0007669"/>
    <property type="project" value="RHEA"/>
</dbReference>
<dbReference type="GO" id="GO:0003678">
    <property type="term" value="F:DNA helicase activity"/>
    <property type="evidence" value="ECO:0000314"/>
    <property type="project" value="MGI"/>
</dbReference>
<dbReference type="GO" id="GO:0044877">
    <property type="term" value="F:protein-containing complex binding"/>
    <property type="evidence" value="ECO:0007669"/>
    <property type="project" value="Ensembl"/>
</dbReference>
<dbReference type="GO" id="GO:0017116">
    <property type="term" value="F:single-stranded DNA helicase activity"/>
    <property type="evidence" value="ECO:0007669"/>
    <property type="project" value="Ensembl"/>
</dbReference>
<dbReference type="GO" id="GO:0006974">
    <property type="term" value="P:DNA damage response"/>
    <property type="evidence" value="ECO:0000315"/>
    <property type="project" value="UniProtKB"/>
</dbReference>
<dbReference type="GO" id="GO:0006269">
    <property type="term" value="P:DNA replication, synthesis of primer"/>
    <property type="evidence" value="ECO:0000304"/>
    <property type="project" value="MGI"/>
</dbReference>
<dbReference type="GO" id="GO:0006261">
    <property type="term" value="P:DNA-templated DNA replication"/>
    <property type="evidence" value="ECO:0000314"/>
    <property type="project" value="MGI"/>
</dbReference>
<dbReference type="GO" id="GO:2000042">
    <property type="term" value="P:negative regulation of double-strand break repair via homologous recombination"/>
    <property type="evidence" value="ECO:0000315"/>
    <property type="project" value="UniProtKB"/>
</dbReference>
<dbReference type="GO" id="GO:1903775">
    <property type="term" value="P:regulation of DNA double-strand break processing"/>
    <property type="evidence" value="ECO:0000315"/>
    <property type="project" value="UniProtKB"/>
</dbReference>
<dbReference type="CDD" id="cd17933">
    <property type="entry name" value="DEXSc_RecD-like"/>
    <property type="match status" value="1"/>
</dbReference>
<dbReference type="CDD" id="cd18809">
    <property type="entry name" value="SF1_C_RecD"/>
    <property type="match status" value="1"/>
</dbReference>
<dbReference type="FunFam" id="3.40.50.300:FF:001523">
    <property type="entry name" value="Helicase (DNA) B"/>
    <property type="match status" value="1"/>
</dbReference>
<dbReference type="Gene3D" id="3.40.50.300">
    <property type="entry name" value="P-loop containing nucleotide triphosphate hydrolases"/>
    <property type="match status" value="2"/>
</dbReference>
<dbReference type="InterPro" id="IPR050534">
    <property type="entry name" value="Coronavir_polyprotein_1ab"/>
</dbReference>
<dbReference type="InterPro" id="IPR027417">
    <property type="entry name" value="P-loop_NTPase"/>
</dbReference>
<dbReference type="InterPro" id="IPR027785">
    <property type="entry name" value="UvrD-like_helicase_C"/>
</dbReference>
<dbReference type="PANTHER" id="PTHR43788:SF6">
    <property type="entry name" value="DNA HELICASE B"/>
    <property type="match status" value="1"/>
</dbReference>
<dbReference type="PANTHER" id="PTHR43788">
    <property type="entry name" value="DNA2/NAM7 HELICASE FAMILY MEMBER"/>
    <property type="match status" value="1"/>
</dbReference>
<dbReference type="Pfam" id="PF13604">
    <property type="entry name" value="AAA_30"/>
    <property type="match status" value="1"/>
</dbReference>
<dbReference type="Pfam" id="PF13538">
    <property type="entry name" value="UvrD_C_2"/>
    <property type="match status" value="1"/>
</dbReference>
<dbReference type="SUPFAM" id="SSF52540">
    <property type="entry name" value="P-loop containing nucleoside triphosphate hydrolases"/>
    <property type="match status" value="2"/>
</dbReference>
<name>HELB_MOUSE</name>
<comment type="function">
    <text evidence="3 4 5 6">5'-3' DNA helicase involved in DNA damage response by acting as an inhibitor of DNA end resection (PubMed:26774285). Recruitment to single-stranded DNA (ssDNA) following DNA damage leads to inhibit the nucleases catalyzing resection, such as EXO1, BLM and DNA2, possibly via the 5'-3' ssDNA translocase activity of HELB (PubMed:26774285). As cells approach S phase, DNA end resection is promoted by the nuclear export of HELB following phosphorylation (PubMed:26774285). Acts independently of TP53BP1 (PubMed:26774285). Unwinds duplex DNA with 5'-3' polarity. Has single-strand DNA-dependent ATPase and DNA helicase activities. Prefers ATP and dATP as substrates. During S phase, may facilitate cellular recovery from replication stress (PubMed:11557815, PubMed:7596831, PubMed:7794903).</text>
</comment>
<comment type="catalytic activity">
    <reaction evidence="1">
        <text>ATP + H2O = ADP + phosphate + H(+)</text>
        <dbReference type="Rhea" id="RHEA:13065"/>
        <dbReference type="ChEBI" id="CHEBI:15377"/>
        <dbReference type="ChEBI" id="CHEBI:15378"/>
        <dbReference type="ChEBI" id="CHEBI:30616"/>
        <dbReference type="ChEBI" id="CHEBI:43474"/>
        <dbReference type="ChEBI" id="CHEBI:456216"/>
        <dbReference type="EC" id="3.6.4.12"/>
    </reaction>
</comment>
<comment type="subunit">
    <text evidence="1">Binds to RPA1; this interaction promotes HELB recruitment to chromatin following DNA damage. Interacts with at least two subunits of the DNA polymerase alpha complex. Interacts with CDC45. Interacts with TOPB1.</text>
</comment>
<comment type="subcellular location">
    <subcellularLocation>
        <location evidence="4">Nucleus</location>
    </subcellularLocation>
    <subcellularLocation>
        <location evidence="4">Cytoplasm</location>
    </subcellularLocation>
    <subcellularLocation>
        <location evidence="1">Chromosome</location>
    </subcellularLocation>
    <text evidence="1">Predominantly nuclear. Phosphorylation at Ser-942 by CDK2 during the G1/S transition results in its nuclear export into the cytoplasm as cells approach and progress through S phase. Following DNA damage, recruited to sites of double-strand breaks by the RPA complex.</text>
</comment>
<comment type="PTM">
    <text evidence="1">Phosphorylated at Ser-942 by CDK2 during the G1/S transition, resulting in its nuclear export into the cytoplasm. As S phase progresses, its exclusion from the nucleus promotes the activation of long-range resection.</text>
</comment>
<comment type="similarity">
    <text evidence="7">Belongs to the RecD family. HELB subfamily.</text>
</comment>
<comment type="sequence caution" evidence="7">
    <conflict type="erroneous initiation">
        <sequence resource="EMBL-CDS" id="BAD21372"/>
    </conflict>
</comment>
<feature type="chain" id="PRO_0000338993" description="DNA helicase B">
    <location>
        <begin position="1"/>
        <end position="1074"/>
    </location>
</feature>
<feature type="region of interest" description="Disordered" evidence="2">
    <location>
        <begin position="1"/>
        <end position="38"/>
    </location>
</feature>
<feature type="region of interest" description="Disordered" evidence="2">
    <location>
        <begin position="380"/>
        <end position="420"/>
    </location>
</feature>
<feature type="region of interest" description="Disordered" evidence="2">
    <location>
        <begin position="932"/>
        <end position="1014"/>
    </location>
</feature>
<feature type="region of interest" description="Disordered" evidence="2">
    <location>
        <begin position="1040"/>
        <end position="1074"/>
    </location>
</feature>
<feature type="short sequence motif" description="Nuclear export signal" evidence="4">
    <location>
        <begin position="1022"/>
        <end position="1046"/>
    </location>
</feature>
<feature type="compositionally biased region" description="Acidic residues" evidence="2">
    <location>
        <begin position="20"/>
        <end position="38"/>
    </location>
</feature>
<feature type="compositionally biased region" description="Polar residues" evidence="2">
    <location>
        <begin position="934"/>
        <end position="946"/>
    </location>
</feature>
<feature type="modified residue" description="Phosphoserine" evidence="9 10">
    <location>
        <position position="942"/>
    </location>
</feature>
<feature type="modified residue" description="Phosphoserine" evidence="9 10">
    <location>
        <position position="946"/>
    </location>
</feature>
<feature type="modified residue" description="Phosphothreonine" evidence="10">
    <location>
        <position position="992"/>
    </location>
</feature>
<feature type="modified residue" description="Phosphoserine" evidence="10">
    <location>
        <position position="1015"/>
    </location>
</feature>
<feature type="modified residue" description="Phosphoserine" evidence="1">
    <location>
        <position position="1026"/>
    </location>
</feature>
<feature type="mutagenesis site" description="No ATPase activity." evidence="4">
    <original>K</original>
    <variation>A</variation>
    <location>
        <position position="462"/>
    </location>
</feature>
<feature type="mutagenesis site" description="Accumulation in the nucleus due to defects in nuclear export." evidence="4">
    <original>VSSVFQNMRL</original>
    <variation>ASSVAQNARA</variation>
    <location>
        <begin position="1029"/>
        <end position="1038"/>
    </location>
</feature>
<feature type="sequence conflict" description="In Ref. 5; AAH68140." evidence="7" ref="5">
    <original>T</original>
    <variation>I</variation>
    <location>
        <position position="805"/>
    </location>
</feature>
<feature type="sequence conflict" description="In Ref. 1; BAB20809." evidence="7" ref="1">
    <original>S</original>
    <variation>T</variation>
    <location>
        <position position="933"/>
    </location>
</feature>
<organism>
    <name type="scientific">Mus musculus</name>
    <name type="common">Mouse</name>
    <dbReference type="NCBI Taxonomy" id="10090"/>
    <lineage>
        <taxon>Eukaryota</taxon>
        <taxon>Metazoa</taxon>
        <taxon>Chordata</taxon>
        <taxon>Craniata</taxon>
        <taxon>Vertebrata</taxon>
        <taxon>Euteleostomi</taxon>
        <taxon>Mammalia</taxon>
        <taxon>Eutheria</taxon>
        <taxon>Euarchontoglires</taxon>
        <taxon>Glires</taxon>
        <taxon>Rodentia</taxon>
        <taxon>Myomorpha</taxon>
        <taxon>Muroidea</taxon>
        <taxon>Muridae</taxon>
        <taxon>Murinae</taxon>
        <taxon>Mus</taxon>
        <taxon>Mus</taxon>
    </lineage>
</organism>
<protein>
    <recommendedName>
        <fullName evidence="7">DNA helicase B</fullName>
        <ecNumber evidence="1">3.6.4.12</ecNumber>
    </recommendedName>
</protein>